<reference key="1">
    <citation type="journal article" date="2011" name="Stand. Genomic Sci.">
        <title>Complete genome sequence of the halophilic and highly halotolerant Chromohalobacter salexigens type strain (1H11(T)).</title>
        <authorList>
            <person name="Copeland A."/>
            <person name="O'Connor K."/>
            <person name="Lucas S."/>
            <person name="Lapidus A."/>
            <person name="Berry K.W."/>
            <person name="Detter J.C."/>
            <person name="Del Rio T.G."/>
            <person name="Hammon N."/>
            <person name="Dalin E."/>
            <person name="Tice H."/>
            <person name="Pitluck S."/>
            <person name="Bruce D."/>
            <person name="Goodwin L."/>
            <person name="Han C."/>
            <person name="Tapia R."/>
            <person name="Saunders E."/>
            <person name="Schmutz J."/>
            <person name="Brettin T."/>
            <person name="Larimer F."/>
            <person name="Land M."/>
            <person name="Hauser L."/>
            <person name="Vargas C."/>
            <person name="Nieto J.J."/>
            <person name="Kyrpides N.C."/>
            <person name="Ivanova N."/>
            <person name="Goker M."/>
            <person name="Klenk H.P."/>
            <person name="Csonka L.N."/>
            <person name="Woyke T."/>
        </authorList>
    </citation>
    <scope>NUCLEOTIDE SEQUENCE [LARGE SCALE GENOMIC DNA]</scope>
    <source>
        <strain>ATCC BAA-138 / DSM 3043 / CIP 106854 / NCIMB 13768 / 1H11</strain>
    </source>
</reference>
<sequence length="560" mass="62246">MTQAREYDYIIIGAGSAGNVLATRLTEDPDVQVLLLEAGGPDYRFDFRTQMPAALAYPLQGKRYNWAFETDPEPYMNNRRMECGRGKGLGGSSLINGMCYLRGNALDYDNWAKIPGLEDWNYLQCLPYFKRAETRDIGPNDYHGGDGPVSVATPKEGNNELYGAFIRAGIEAGYPATEDVNGYQQEGFGPMDRTTTPNGRRASTARGYLDIAKQRPNLTIETHATTDVIEFEGKRAVGVSYERKGQAQRVRARREVLLCAGAIASPQILQRSGVGNPEHLEEFDIPVVHELPGVGENLQDHLEMYIQYECKKPISLYPALKWYNQPKIGAEWLFFGKGIGASNQFEAAGFIRTNDQEEWPNLQYHFLPIAISYNGKSAVQAHGFQAHVGSMRSMSRGRIRLTSRDPKAAPSILFNYMSHDKDWQEFRDAIRITREIIEQPTMDEYRGREISPGPNVQSDAELDEFVRQHAETAYHPAGSCKMGSADDAMAVVDGAGRVHGLEGLRVIDASIMPVIATGNLNAPTIMIAEKMADKVRGRDPLPPAKVDYYVANGAPARRRA</sequence>
<evidence type="ECO:0000255" key="1">
    <source>
        <dbReference type="HAMAP-Rule" id="MF_00750"/>
    </source>
</evidence>
<protein>
    <recommendedName>
        <fullName evidence="1">Oxygen-dependent choline dehydrogenase 1</fullName>
        <shortName evidence="1">CDH 1</shortName>
        <shortName evidence="1">CHD 1</shortName>
        <ecNumber evidence="1">1.1.99.1</ecNumber>
    </recommendedName>
    <alternativeName>
        <fullName evidence="1">Betaine aldehyde dehydrogenase 1</fullName>
        <shortName evidence="1">BADH 1</shortName>
        <ecNumber evidence="1">1.2.1.8</ecNumber>
    </alternativeName>
</protein>
<dbReference type="EC" id="1.1.99.1" evidence="1"/>
<dbReference type="EC" id="1.2.1.8" evidence="1"/>
<dbReference type="EMBL" id="CP000285">
    <property type="protein sequence ID" value="ABE58867.1"/>
    <property type="molecule type" value="Genomic_DNA"/>
</dbReference>
<dbReference type="RefSeq" id="WP_011506813.1">
    <property type="nucleotide sequence ID" value="NC_007963.1"/>
</dbReference>
<dbReference type="SMR" id="Q1QXE1"/>
<dbReference type="STRING" id="290398.Csal_1514"/>
<dbReference type="GeneID" id="95334240"/>
<dbReference type="KEGG" id="csa:Csal_1514"/>
<dbReference type="eggNOG" id="COG2303">
    <property type="taxonomic scope" value="Bacteria"/>
</dbReference>
<dbReference type="HOGENOM" id="CLU_002865_7_1_6"/>
<dbReference type="OrthoDB" id="9785276at2"/>
<dbReference type="UniPathway" id="UPA00529">
    <property type="reaction ID" value="UER00385"/>
</dbReference>
<dbReference type="Proteomes" id="UP000000239">
    <property type="component" value="Chromosome"/>
</dbReference>
<dbReference type="GO" id="GO:0016020">
    <property type="term" value="C:membrane"/>
    <property type="evidence" value="ECO:0007669"/>
    <property type="project" value="TreeGrafter"/>
</dbReference>
<dbReference type="GO" id="GO:0008802">
    <property type="term" value="F:betaine-aldehyde dehydrogenase (NAD+) activity"/>
    <property type="evidence" value="ECO:0007669"/>
    <property type="project" value="UniProtKB-EC"/>
</dbReference>
<dbReference type="GO" id="GO:0008812">
    <property type="term" value="F:choline dehydrogenase activity"/>
    <property type="evidence" value="ECO:0007669"/>
    <property type="project" value="UniProtKB-UniRule"/>
</dbReference>
<dbReference type="GO" id="GO:0050660">
    <property type="term" value="F:flavin adenine dinucleotide binding"/>
    <property type="evidence" value="ECO:0007669"/>
    <property type="project" value="InterPro"/>
</dbReference>
<dbReference type="GO" id="GO:0019285">
    <property type="term" value="P:glycine betaine biosynthetic process from choline"/>
    <property type="evidence" value="ECO:0007669"/>
    <property type="project" value="UniProtKB-UniRule"/>
</dbReference>
<dbReference type="Gene3D" id="3.50.50.60">
    <property type="entry name" value="FAD/NAD(P)-binding domain"/>
    <property type="match status" value="1"/>
</dbReference>
<dbReference type="Gene3D" id="3.30.560.10">
    <property type="entry name" value="Glucose Oxidase, domain 3"/>
    <property type="match status" value="1"/>
</dbReference>
<dbReference type="HAMAP" id="MF_00750">
    <property type="entry name" value="Choline_dehydrogen"/>
    <property type="match status" value="1"/>
</dbReference>
<dbReference type="InterPro" id="IPR011533">
    <property type="entry name" value="BetA"/>
</dbReference>
<dbReference type="InterPro" id="IPR036188">
    <property type="entry name" value="FAD/NAD-bd_sf"/>
</dbReference>
<dbReference type="InterPro" id="IPR012132">
    <property type="entry name" value="GMC_OxRdtase"/>
</dbReference>
<dbReference type="InterPro" id="IPR000172">
    <property type="entry name" value="GMC_OxRdtase_N"/>
</dbReference>
<dbReference type="InterPro" id="IPR007867">
    <property type="entry name" value="GMC_OxRtase_C"/>
</dbReference>
<dbReference type="NCBIfam" id="TIGR01810">
    <property type="entry name" value="betA"/>
    <property type="match status" value="1"/>
</dbReference>
<dbReference type="NCBIfam" id="NF002550">
    <property type="entry name" value="PRK02106.1"/>
    <property type="match status" value="1"/>
</dbReference>
<dbReference type="PANTHER" id="PTHR11552:SF147">
    <property type="entry name" value="CHOLINE DEHYDROGENASE, MITOCHONDRIAL"/>
    <property type="match status" value="1"/>
</dbReference>
<dbReference type="PANTHER" id="PTHR11552">
    <property type="entry name" value="GLUCOSE-METHANOL-CHOLINE GMC OXIDOREDUCTASE"/>
    <property type="match status" value="1"/>
</dbReference>
<dbReference type="Pfam" id="PF05199">
    <property type="entry name" value="GMC_oxred_C"/>
    <property type="match status" value="1"/>
</dbReference>
<dbReference type="Pfam" id="PF00732">
    <property type="entry name" value="GMC_oxred_N"/>
    <property type="match status" value="1"/>
</dbReference>
<dbReference type="PIRSF" id="PIRSF000137">
    <property type="entry name" value="Alcohol_oxidase"/>
    <property type="match status" value="1"/>
</dbReference>
<dbReference type="SUPFAM" id="SSF54373">
    <property type="entry name" value="FAD-linked reductases, C-terminal domain"/>
    <property type="match status" value="1"/>
</dbReference>
<dbReference type="SUPFAM" id="SSF51905">
    <property type="entry name" value="FAD/NAD(P)-binding domain"/>
    <property type="match status" value="1"/>
</dbReference>
<dbReference type="PROSITE" id="PS00623">
    <property type="entry name" value="GMC_OXRED_1"/>
    <property type="match status" value="1"/>
</dbReference>
<dbReference type="PROSITE" id="PS00624">
    <property type="entry name" value="GMC_OXRED_2"/>
    <property type="match status" value="1"/>
</dbReference>
<name>BETA1_CHRSD</name>
<feature type="chain" id="PRO_0000245316" description="Oxygen-dependent choline dehydrogenase 1">
    <location>
        <begin position="1"/>
        <end position="560"/>
    </location>
</feature>
<feature type="active site" description="Proton acceptor" evidence="1">
    <location>
        <position position="475"/>
    </location>
</feature>
<feature type="binding site" evidence="1">
    <location>
        <begin position="8"/>
        <end position="37"/>
    </location>
    <ligand>
        <name>FAD</name>
        <dbReference type="ChEBI" id="CHEBI:57692"/>
    </ligand>
</feature>
<comment type="function">
    <text evidence="1">Involved in the biosynthesis of the osmoprotectant glycine betaine. Catalyzes the oxidation of choline to betaine aldehyde and betaine aldehyde to glycine betaine at the same rate.</text>
</comment>
<comment type="catalytic activity">
    <reaction evidence="1">
        <text>choline + A = betaine aldehyde + AH2</text>
        <dbReference type="Rhea" id="RHEA:17433"/>
        <dbReference type="ChEBI" id="CHEBI:13193"/>
        <dbReference type="ChEBI" id="CHEBI:15354"/>
        <dbReference type="ChEBI" id="CHEBI:15710"/>
        <dbReference type="ChEBI" id="CHEBI:17499"/>
        <dbReference type="EC" id="1.1.99.1"/>
    </reaction>
</comment>
<comment type="catalytic activity">
    <reaction evidence="1">
        <text>betaine aldehyde + NAD(+) + H2O = glycine betaine + NADH + 2 H(+)</text>
        <dbReference type="Rhea" id="RHEA:15305"/>
        <dbReference type="ChEBI" id="CHEBI:15377"/>
        <dbReference type="ChEBI" id="CHEBI:15378"/>
        <dbReference type="ChEBI" id="CHEBI:15710"/>
        <dbReference type="ChEBI" id="CHEBI:17750"/>
        <dbReference type="ChEBI" id="CHEBI:57540"/>
        <dbReference type="ChEBI" id="CHEBI:57945"/>
        <dbReference type="EC" id="1.2.1.8"/>
    </reaction>
</comment>
<comment type="cofactor">
    <cofactor evidence="1">
        <name>FAD</name>
        <dbReference type="ChEBI" id="CHEBI:57692"/>
    </cofactor>
</comment>
<comment type="pathway">
    <text evidence="1">Amine and polyamine biosynthesis; betaine biosynthesis via choline pathway; betaine aldehyde from choline (cytochrome c reductase route): step 1/1.</text>
</comment>
<comment type="similarity">
    <text evidence="1">Belongs to the GMC oxidoreductase family.</text>
</comment>
<gene>
    <name evidence="1" type="primary">betA1</name>
    <name type="synonym">betA</name>
    <name type="ordered locus">Csal_1514</name>
</gene>
<keyword id="KW-0274">FAD</keyword>
<keyword id="KW-0285">Flavoprotein</keyword>
<keyword id="KW-0520">NAD</keyword>
<keyword id="KW-0560">Oxidoreductase</keyword>
<keyword id="KW-1185">Reference proteome</keyword>
<organism>
    <name type="scientific">Chromohalobacter salexigens (strain ATCC BAA-138 / DSM 3043 / CIP 106854 / NCIMB 13768 / 1H11)</name>
    <dbReference type="NCBI Taxonomy" id="290398"/>
    <lineage>
        <taxon>Bacteria</taxon>
        <taxon>Pseudomonadati</taxon>
        <taxon>Pseudomonadota</taxon>
        <taxon>Gammaproteobacteria</taxon>
        <taxon>Oceanospirillales</taxon>
        <taxon>Halomonadaceae</taxon>
        <taxon>Chromohalobacter</taxon>
    </lineage>
</organism>
<proteinExistence type="inferred from homology"/>
<accession>Q1QXE1</accession>